<feature type="initiator methionine" description="Removed" evidence="2 3">
    <location>
        <position position="1"/>
    </location>
</feature>
<feature type="chain" id="PRO_0000111116" description="Small ribosomal subunit protein bS18">
    <location>
        <begin position="2"/>
        <end position="78"/>
    </location>
</feature>
<protein>
    <recommendedName>
        <fullName evidence="5">Small ribosomal subunit protein bS18</fullName>
    </recommendedName>
    <alternativeName>
        <fullName>30S ribosomal protein S18</fullName>
    </alternativeName>
    <alternativeName>
        <fullName evidence="4">BS19</fullName>
    </alternativeName>
    <alternativeName>
        <fullName>BS21</fullName>
    </alternativeName>
</protein>
<comment type="function">
    <text evidence="1">Binds as a heterodimer with protein bS6 to the central domain of the 16S rRNA, where it helps stabilize the platform of the 30S subunit.</text>
</comment>
<comment type="subunit">
    <text evidence="1">Part of the 30S ribosomal subunit. Forms a tight heterodimer with protein bS6.</text>
</comment>
<comment type="similarity">
    <text evidence="5">Belongs to the bacterial ribosomal protein bS18 family.</text>
</comment>
<proteinExistence type="evidence at protein level"/>
<keyword id="KW-0903">Direct protein sequencing</keyword>
<keyword id="KW-0687">Ribonucleoprotein</keyword>
<keyword id="KW-0689">Ribosomal protein</keyword>
<keyword id="KW-0694">RNA-binding</keyword>
<keyword id="KW-0699">rRNA-binding</keyword>
<evidence type="ECO:0000255" key="1">
    <source>
        <dbReference type="HAMAP-Rule" id="MF_00270"/>
    </source>
</evidence>
<evidence type="ECO:0000269" key="2">
    <source>
    </source>
</evidence>
<evidence type="ECO:0000269" key="3">
    <source>
    </source>
</evidence>
<evidence type="ECO:0000303" key="4">
    <source>
    </source>
</evidence>
<evidence type="ECO:0000305" key="5"/>
<dbReference type="PIR" id="S03556">
    <property type="entry name" value="R3BS18"/>
</dbReference>
<dbReference type="RefSeq" id="WP_008880812.1">
    <property type="nucleotide sequence ID" value="NZ_RCTK01000012.1"/>
</dbReference>
<dbReference type="SMR" id="P10806"/>
<dbReference type="GeneID" id="89612828"/>
<dbReference type="OrthoDB" id="9812008at2"/>
<dbReference type="GO" id="GO:0022627">
    <property type="term" value="C:cytosolic small ribosomal subunit"/>
    <property type="evidence" value="ECO:0007669"/>
    <property type="project" value="TreeGrafter"/>
</dbReference>
<dbReference type="GO" id="GO:0070181">
    <property type="term" value="F:small ribosomal subunit rRNA binding"/>
    <property type="evidence" value="ECO:0007669"/>
    <property type="project" value="TreeGrafter"/>
</dbReference>
<dbReference type="GO" id="GO:0003735">
    <property type="term" value="F:structural constituent of ribosome"/>
    <property type="evidence" value="ECO:0007669"/>
    <property type="project" value="InterPro"/>
</dbReference>
<dbReference type="GO" id="GO:0006412">
    <property type="term" value="P:translation"/>
    <property type="evidence" value="ECO:0007669"/>
    <property type="project" value="UniProtKB-UniRule"/>
</dbReference>
<dbReference type="FunFam" id="4.10.640.10:FF:000003">
    <property type="entry name" value="30S ribosomal protein S18"/>
    <property type="match status" value="1"/>
</dbReference>
<dbReference type="Gene3D" id="4.10.640.10">
    <property type="entry name" value="Ribosomal protein S18"/>
    <property type="match status" value="1"/>
</dbReference>
<dbReference type="HAMAP" id="MF_00270">
    <property type="entry name" value="Ribosomal_bS18"/>
    <property type="match status" value="1"/>
</dbReference>
<dbReference type="InterPro" id="IPR001648">
    <property type="entry name" value="Ribosomal_bS18"/>
</dbReference>
<dbReference type="InterPro" id="IPR018275">
    <property type="entry name" value="Ribosomal_bS18_CS"/>
</dbReference>
<dbReference type="InterPro" id="IPR036870">
    <property type="entry name" value="Ribosomal_bS18_sf"/>
</dbReference>
<dbReference type="NCBIfam" id="TIGR00165">
    <property type="entry name" value="S18"/>
    <property type="match status" value="1"/>
</dbReference>
<dbReference type="PANTHER" id="PTHR13479">
    <property type="entry name" value="30S RIBOSOMAL PROTEIN S18"/>
    <property type="match status" value="1"/>
</dbReference>
<dbReference type="PANTHER" id="PTHR13479:SF40">
    <property type="entry name" value="SMALL RIBOSOMAL SUBUNIT PROTEIN BS18M"/>
    <property type="match status" value="1"/>
</dbReference>
<dbReference type="Pfam" id="PF01084">
    <property type="entry name" value="Ribosomal_S18"/>
    <property type="match status" value="1"/>
</dbReference>
<dbReference type="PRINTS" id="PR00974">
    <property type="entry name" value="RIBOSOMALS18"/>
</dbReference>
<dbReference type="SUPFAM" id="SSF46911">
    <property type="entry name" value="Ribosomal protein S18"/>
    <property type="match status" value="1"/>
</dbReference>
<dbReference type="PROSITE" id="PS00057">
    <property type="entry name" value="RIBOSOMAL_S18"/>
    <property type="match status" value="1"/>
</dbReference>
<name>RS18_GEOSE</name>
<organism>
    <name type="scientific">Geobacillus stearothermophilus</name>
    <name type="common">Bacillus stearothermophilus</name>
    <dbReference type="NCBI Taxonomy" id="1422"/>
    <lineage>
        <taxon>Bacteria</taxon>
        <taxon>Bacillati</taxon>
        <taxon>Bacillota</taxon>
        <taxon>Bacilli</taxon>
        <taxon>Bacillales</taxon>
        <taxon>Anoxybacillaceae</taxon>
        <taxon>Geobacillus</taxon>
    </lineage>
</organism>
<accession>P10806</accession>
<reference key="1">
    <citation type="journal article" date="1989" name="FEBS Lett.">
        <title>The complete amino acid sequence of ribosomal protein S18 from the moderate thermophile Bacillus stearothermophilus.</title>
        <authorList>
            <person name="McDougall J."/>
            <person name="Choli T."/>
            <person name="Kruft V."/>
            <person name="Kapp U."/>
            <person name="Wittmann-Liebold B."/>
        </authorList>
    </citation>
    <scope>PROTEIN SEQUENCE OF 2-78</scope>
    <source>
        <strain>799</strain>
    </source>
</reference>
<reference key="2">
    <citation type="journal article" date="1974" name="FEBS Lett.">
        <title>Procaryotic ribosomal proteins: N-terminal sequence homologies and structural correspondence of 30 S ribosomal proteins from Escherichia coli and Bacillus stearothermophilus.</title>
        <authorList>
            <person name="Yaguchi M."/>
            <person name="Matheson A.T."/>
            <person name="Visentin L.P."/>
        </authorList>
    </citation>
    <scope>PROTEIN SEQUENCE OF 2-16</scope>
    <source>
        <strain>DSM 13240 / CIP 106956 / 10</strain>
    </source>
</reference>
<gene>
    <name type="primary">rpsR</name>
</gene>
<sequence length="78" mass="8969">MAGRKGGRGKRRKVCYFTANNITHIDYKDVDLLKKFISERGKILPRRVTGTSAKYQRKLTVAIKRARQMALLPYVADE</sequence>